<sequence length="238" mass="25876">MNKNVMVKGLTALTILTILTSLGFAENISNQPHSIAKAEKNVKEITDATKEPYNSVVAFVGGTGVVVGKNTIVTNKHIAKSNDIFKNRVSAHHSSKGKGGGNYDVKDIVEYPGKEDLAIVHVHETSTEGLNFNKNVSYTKFADGAKVKDRISVIGYPKGAQTKYKMFESTGTINHISGTFMEFDAYAQPGNSGSPVLNSKHELIGILYAGSGKDESEKNFGVYFTPQLKEFIQNNIEK</sequence>
<evidence type="ECO:0000250" key="1"/>
<evidence type="ECO:0000305" key="2"/>
<reference key="1">
    <citation type="journal article" date="2008" name="J. Bacteriol.">
        <title>Genome sequence of Staphylococcus aureus strain Newman and comparative analysis of staphylococcal genomes: polymorphism and evolution of two major pathogenicity islands.</title>
        <authorList>
            <person name="Baba T."/>
            <person name="Bae T."/>
            <person name="Schneewind O."/>
            <person name="Takeuchi F."/>
            <person name="Hiramatsu K."/>
        </authorList>
    </citation>
    <scope>NUCLEOTIDE SEQUENCE [LARGE SCALE GENOMIC DNA]</scope>
    <source>
        <strain>Newman</strain>
    </source>
</reference>
<organism>
    <name type="scientific">Staphylococcus aureus (strain Newman)</name>
    <dbReference type="NCBI Taxonomy" id="426430"/>
    <lineage>
        <taxon>Bacteria</taxon>
        <taxon>Bacillati</taxon>
        <taxon>Bacillota</taxon>
        <taxon>Bacilli</taxon>
        <taxon>Bacillales</taxon>
        <taxon>Staphylococcaceae</taxon>
        <taxon>Staphylococcus</taxon>
    </lineage>
</organism>
<comment type="subcellular location">
    <subcellularLocation>
        <location evidence="1">Secreted</location>
    </subcellularLocation>
</comment>
<comment type="similarity">
    <text evidence="2">Belongs to the peptidase S1B family.</text>
</comment>
<accession>A6QHZ6</accession>
<dbReference type="EC" id="3.4.21.-"/>
<dbReference type="EMBL" id="AP009351">
    <property type="protein sequence ID" value="BAF67978.1"/>
    <property type="molecule type" value="Genomic_DNA"/>
</dbReference>
<dbReference type="RefSeq" id="WP_001039423.1">
    <property type="nucleotide sequence ID" value="NZ_JBBIAE010000013.1"/>
</dbReference>
<dbReference type="SMR" id="A6QHZ6"/>
<dbReference type="MEROPS" id="S01.503"/>
<dbReference type="KEGG" id="sae:NWMN_1706"/>
<dbReference type="HOGENOM" id="CLU_073589_2_0_9"/>
<dbReference type="Proteomes" id="UP000006386">
    <property type="component" value="Chromosome"/>
</dbReference>
<dbReference type="GO" id="GO:0005576">
    <property type="term" value="C:extracellular region"/>
    <property type="evidence" value="ECO:0007669"/>
    <property type="project" value="UniProtKB-SubCell"/>
</dbReference>
<dbReference type="GO" id="GO:0004252">
    <property type="term" value="F:serine-type endopeptidase activity"/>
    <property type="evidence" value="ECO:0007669"/>
    <property type="project" value="InterPro"/>
</dbReference>
<dbReference type="GO" id="GO:0006508">
    <property type="term" value="P:proteolysis"/>
    <property type="evidence" value="ECO:0007669"/>
    <property type="project" value="UniProtKB-KW"/>
</dbReference>
<dbReference type="Gene3D" id="2.40.10.10">
    <property type="entry name" value="Trypsin-like serine proteases"/>
    <property type="match status" value="2"/>
</dbReference>
<dbReference type="InterPro" id="IPR009003">
    <property type="entry name" value="Peptidase_S1_PA"/>
</dbReference>
<dbReference type="InterPro" id="IPR043504">
    <property type="entry name" value="Peptidase_S1_PA_chymotrypsin"/>
</dbReference>
<dbReference type="InterPro" id="IPR008256">
    <property type="entry name" value="Peptidase_S1B"/>
</dbReference>
<dbReference type="InterPro" id="IPR008353">
    <property type="entry name" value="Peptidase_S1B_tx"/>
</dbReference>
<dbReference type="InterPro" id="IPR001254">
    <property type="entry name" value="Trypsin_dom"/>
</dbReference>
<dbReference type="InterPro" id="IPR028301">
    <property type="entry name" value="V8_his_AS"/>
</dbReference>
<dbReference type="PANTHER" id="PTHR43019:SF23">
    <property type="entry name" value="PROTEASE DO-LIKE 5, CHLOROPLASTIC"/>
    <property type="match status" value="1"/>
</dbReference>
<dbReference type="PANTHER" id="PTHR43019">
    <property type="entry name" value="SERINE ENDOPROTEASE DEGS"/>
    <property type="match status" value="1"/>
</dbReference>
<dbReference type="Pfam" id="PF00089">
    <property type="entry name" value="Trypsin"/>
    <property type="match status" value="1"/>
</dbReference>
<dbReference type="PRINTS" id="PR01774">
    <property type="entry name" value="EXFOLTOXIN"/>
</dbReference>
<dbReference type="PRINTS" id="PR00839">
    <property type="entry name" value="V8PROTEASE"/>
</dbReference>
<dbReference type="SUPFAM" id="SSF50494">
    <property type="entry name" value="Trypsin-like serine proteases"/>
    <property type="match status" value="1"/>
</dbReference>
<dbReference type="PROSITE" id="PS00672">
    <property type="entry name" value="V8_HIS"/>
    <property type="match status" value="1"/>
</dbReference>
<gene>
    <name type="primary">splA</name>
    <name type="ordered locus">NWMN_1706</name>
</gene>
<feature type="signal peptide" evidence="1">
    <location>
        <begin position="1"/>
        <end position="38"/>
    </location>
</feature>
<feature type="chain" id="PRO_0000359534" description="Serine protease SplA">
    <location>
        <begin position="39"/>
        <end position="238"/>
    </location>
</feature>
<feature type="active site" description="Charge relay system" evidence="1">
    <location>
        <position position="77"/>
    </location>
</feature>
<feature type="active site" description="Charge relay system" evidence="1">
    <location>
        <position position="116"/>
    </location>
</feature>
<feature type="active site" description="Charge relay system" evidence="1">
    <location>
        <position position="192"/>
    </location>
</feature>
<protein>
    <recommendedName>
        <fullName>Serine protease SplA</fullName>
        <ecNumber>3.4.21.-</ecNumber>
    </recommendedName>
</protein>
<name>SPLA_STAAE</name>
<keyword id="KW-0378">Hydrolase</keyword>
<keyword id="KW-0645">Protease</keyword>
<keyword id="KW-0964">Secreted</keyword>
<keyword id="KW-0720">Serine protease</keyword>
<keyword id="KW-0732">Signal</keyword>
<proteinExistence type="inferred from homology"/>